<protein>
    <recommendedName>
        <fullName>Creatine kinase U-type, mitochondrial</fullName>
        <ecNumber>2.7.3.2</ecNumber>
    </recommendedName>
    <alternativeName>
        <fullName>Acidic-type mitochondrial creatine kinase</fullName>
        <shortName>Mia-CK</shortName>
    </alternativeName>
    <alternativeName>
        <fullName>Ubiquitous mitochondrial creatine kinase</fullName>
        <shortName>U-MtCK</shortName>
    </alternativeName>
</protein>
<proteinExistence type="evidence at protein level"/>
<dbReference type="EC" id="2.7.3.2"/>
<dbReference type="EMBL" id="X59737">
    <property type="protein sequence ID" value="CAA42415.1"/>
    <property type="molecule type" value="mRNA"/>
</dbReference>
<dbReference type="PIR" id="S17189">
    <property type="entry name" value="S17189"/>
</dbReference>
<dbReference type="SMR" id="P25809"/>
<dbReference type="FunCoup" id="P25809">
    <property type="interactions" value="40"/>
</dbReference>
<dbReference type="IntAct" id="P25809">
    <property type="interactions" value="3"/>
</dbReference>
<dbReference type="MINT" id="P25809"/>
<dbReference type="STRING" id="10116.ENSRNOP00000044253"/>
<dbReference type="iPTMnet" id="P25809"/>
<dbReference type="PhosphoSitePlus" id="P25809"/>
<dbReference type="SwissPalm" id="P25809"/>
<dbReference type="jPOST" id="P25809"/>
<dbReference type="PaxDb" id="10116-ENSRNOP00000044253"/>
<dbReference type="UCSC" id="RGD:61976">
    <property type="organism name" value="rat"/>
</dbReference>
<dbReference type="AGR" id="RGD:61976"/>
<dbReference type="RGD" id="61976">
    <property type="gene designation" value="Ckmt1"/>
</dbReference>
<dbReference type="eggNOG" id="KOG3581">
    <property type="taxonomic scope" value="Eukaryota"/>
</dbReference>
<dbReference type="InParanoid" id="P25809"/>
<dbReference type="PhylomeDB" id="P25809"/>
<dbReference type="Reactome" id="R-RNO-71288">
    <property type="pathway name" value="Creatine metabolism"/>
</dbReference>
<dbReference type="PRO" id="PR:P25809"/>
<dbReference type="Proteomes" id="UP000002494">
    <property type="component" value="Unplaced"/>
</dbReference>
<dbReference type="GO" id="GO:0005743">
    <property type="term" value="C:mitochondrial inner membrane"/>
    <property type="evidence" value="ECO:0007669"/>
    <property type="project" value="UniProtKB-SubCell"/>
</dbReference>
<dbReference type="GO" id="GO:0044289">
    <property type="term" value="C:mitochondrial inner-outer membrane contact site"/>
    <property type="evidence" value="ECO:0000314"/>
    <property type="project" value="RGD"/>
</dbReference>
<dbReference type="GO" id="GO:0005739">
    <property type="term" value="C:mitochondrion"/>
    <property type="evidence" value="ECO:0000266"/>
    <property type="project" value="RGD"/>
</dbReference>
<dbReference type="GO" id="GO:0043204">
    <property type="term" value="C:perikaryon"/>
    <property type="evidence" value="ECO:0000314"/>
    <property type="project" value="RGD"/>
</dbReference>
<dbReference type="GO" id="GO:0005524">
    <property type="term" value="F:ATP binding"/>
    <property type="evidence" value="ECO:0007669"/>
    <property type="project" value="UniProtKB-KW"/>
</dbReference>
<dbReference type="GO" id="GO:0004111">
    <property type="term" value="F:creatine kinase activity"/>
    <property type="evidence" value="ECO:0000314"/>
    <property type="project" value="RGD"/>
</dbReference>
<dbReference type="GO" id="GO:0042802">
    <property type="term" value="F:identical protein binding"/>
    <property type="evidence" value="ECO:0000353"/>
    <property type="project" value="RGD"/>
</dbReference>
<dbReference type="GO" id="GO:0021549">
    <property type="term" value="P:cerebellum development"/>
    <property type="evidence" value="ECO:0000270"/>
    <property type="project" value="RGD"/>
</dbReference>
<dbReference type="GO" id="GO:0048565">
    <property type="term" value="P:digestive tract development"/>
    <property type="evidence" value="ECO:0000270"/>
    <property type="project" value="RGD"/>
</dbReference>
<dbReference type="GO" id="GO:0001822">
    <property type="term" value="P:kidney development"/>
    <property type="evidence" value="ECO:0000270"/>
    <property type="project" value="RGD"/>
</dbReference>
<dbReference type="GO" id="GO:0043066">
    <property type="term" value="P:negative regulation of apoptotic process"/>
    <property type="evidence" value="ECO:0000266"/>
    <property type="project" value="RGD"/>
</dbReference>
<dbReference type="GO" id="GO:0046314">
    <property type="term" value="P:phosphocreatine biosynthetic process"/>
    <property type="evidence" value="ECO:0000318"/>
    <property type="project" value="GO_Central"/>
</dbReference>
<dbReference type="GO" id="GO:0007519">
    <property type="term" value="P:skeletal muscle tissue development"/>
    <property type="evidence" value="ECO:0000270"/>
    <property type="project" value="RGD"/>
</dbReference>
<dbReference type="CDD" id="cd00716">
    <property type="entry name" value="creatine_kinase_like"/>
    <property type="match status" value="1"/>
</dbReference>
<dbReference type="FunFam" id="3.30.590.10:FF:000002">
    <property type="entry name" value="Creatine kinase S-type, mitochondrial"/>
    <property type="match status" value="1"/>
</dbReference>
<dbReference type="FunFam" id="1.10.135.10:FF:000002">
    <property type="entry name" value="creatine kinase S-type, mitochondrial"/>
    <property type="match status" value="1"/>
</dbReference>
<dbReference type="Gene3D" id="1.10.135.10">
    <property type="entry name" value="ATP:guanido phosphotransferase, N-terminal domain"/>
    <property type="match status" value="1"/>
</dbReference>
<dbReference type="Gene3D" id="3.30.590.10">
    <property type="entry name" value="Glutamine synthetase/guanido kinase, catalytic domain"/>
    <property type="match status" value="1"/>
</dbReference>
<dbReference type="InterPro" id="IPR000749">
    <property type="entry name" value="ATP-guanido_PTrfase"/>
</dbReference>
<dbReference type="InterPro" id="IPR022415">
    <property type="entry name" value="ATP-guanido_PTrfase_AS"/>
</dbReference>
<dbReference type="InterPro" id="IPR022414">
    <property type="entry name" value="ATP-guanido_PTrfase_cat"/>
</dbReference>
<dbReference type="InterPro" id="IPR022413">
    <property type="entry name" value="ATP-guanido_PTrfase_N"/>
</dbReference>
<dbReference type="InterPro" id="IPR036802">
    <property type="entry name" value="ATP-guanido_PTrfase_N_sf"/>
</dbReference>
<dbReference type="InterPro" id="IPR014746">
    <property type="entry name" value="Gln_synth/guanido_kin_cat_dom"/>
</dbReference>
<dbReference type="PANTHER" id="PTHR11547">
    <property type="entry name" value="ARGININE OR CREATINE KINASE"/>
    <property type="match status" value="1"/>
</dbReference>
<dbReference type="PANTHER" id="PTHR11547:SF24">
    <property type="entry name" value="CREATINE KINASE U-TYPE, MITOCHONDRIAL"/>
    <property type="match status" value="1"/>
</dbReference>
<dbReference type="Pfam" id="PF00217">
    <property type="entry name" value="ATP-gua_Ptrans"/>
    <property type="match status" value="1"/>
</dbReference>
<dbReference type="Pfam" id="PF02807">
    <property type="entry name" value="ATP-gua_PtransN"/>
    <property type="match status" value="1"/>
</dbReference>
<dbReference type="SUPFAM" id="SSF55931">
    <property type="entry name" value="Glutamine synthetase/guanido kinase"/>
    <property type="match status" value="1"/>
</dbReference>
<dbReference type="SUPFAM" id="SSF48034">
    <property type="entry name" value="Guanido kinase N-terminal domain"/>
    <property type="match status" value="1"/>
</dbReference>
<dbReference type="PROSITE" id="PS00112">
    <property type="entry name" value="PHOSPHAGEN_KINASE"/>
    <property type="match status" value="1"/>
</dbReference>
<dbReference type="PROSITE" id="PS51510">
    <property type="entry name" value="PHOSPHAGEN_KINASE_C"/>
    <property type="match status" value="1"/>
</dbReference>
<dbReference type="PROSITE" id="PS51509">
    <property type="entry name" value="PHOSPHAGEN_KINASE_N"/>
    <property type="match status" value="1"/>
</dbReference>
<name>KCRU_RAT</name>
<sequence length="418" mass="47029">MAGPFSRLLSARPGLKLLALAGAGSLAAGILLRPESVRAATGERRRLYPPSAEYPDLRKHNNCMASHLTPAVYARLCDKTTPTGWTLDQCIQTGVDNPGHPFIKTVGMVAGDEETYEVFAELFDPVIQERHNGYDPRTMKHTTDLDASKIRSGYFDERYVLSSRVRTGRSIRGLSLPPACTRAERREVERVVVDALSGLKGDLAGRYYRLSEMTEAEQQQLIDDHFLFDKPVSPLLTAAGMARDWPDARGIWHNNEKSFLIWVNEEDHTRVISMEKGGNMKRVFERFCRGLKKVEKLIQERGWEFMWNERLGYILTCPSNLGTGLRAGVHVKLPLLSKDSRFPKILENLRLQKRGTGGVDTPATADVFDISNLDRLGKSEVELVQLVIDGVNYLIDCERRLEKGQDIRIPPPLVHGKH</sequence>
<accession>P25809</accession>
<comment type="function">
    <text>Reversibly catalyzes the transfer of phosphate between ATP and various phosphogens (e.g. creatine phosphate). Creatine kinase isoenzymes play a central role in energy transduction in tissues with large, fluctuating energy demands, such as skeletal muscle, heart, brain and spermatozoa.</text>
</comment>
<comment type="catalytic activity">
    <reaction evidence="7">
        <text>creatine + ATP = N-phosphocreatine + ADP + H(+)</text>
        <dbReference type="Rhea" id="RHEA:17157"/>
        <dbReference type="ChEBI" id="CHEBI:15378"/>
        <dbReference type="ChEBI" id="CHEBI:30616"/>
        <dbReference type="ChEBI" id="CHEBI:57947"/>
        <dbReference type="ChEBI" id="CHEBI:58092"/>
        <dbReference type="ChEBI" id="CHEBI:456216"/>
        <dbReference type="EC" id="2.7.3.2"/>
    </reaction>
</comment>
<comment type="subunit">
    <text>Exists as an octamer composed of four MTCK homodimers.</text>
</comment>
<comment type="subcellular location">
    <subcellularLocation>
        <location>Mitochondrion inner membrane</location>
        <topology>Peripheral membrane protein</topology>
        <orientation>Intermembrane side</orientation>
    </subcellularLocation>
</comment>
<comment type="tissue specificity">
    <text evidence="8">In many tissues, with highest levels in brain gut and kidney. In the kidney localized primarily in the outer medulla in the thick ascending limb and distal convoluted tubule.</text>
</comment>
<comment type="miscellaneous">
    <text>Mitochondrial creatine kinase binds cardiolipin.</text>
</comment>
<comment type="similarity">
    <text evidence="5 6">Belongs to the ATP:guanido phosphotransferase family.</text>
</comment>
<gene>
    <name type="primary">Ckmt1</name>
    <name type="synonym">Ckmt</name>
</gene>
<reference key="1">
    <citation type="journal article" date="1991" name="Biochim. Biophys. Acta">
        <title>Structural characterization and tissue-specific expression of the mRNAs encoding isoenzymes from two rat mitochondrial creatine kinase genes.</title>
        <authorList>
            <person name="Payne R.M."/>
            <person name="Haas R.C."/>
            <person name="Strauss A.W."/>
        </authorList>
    </citation>
    <scope>NUCLEOTIDE SEQUENCE [MRNA]</scope>
    <source>
        <strain>Sprague-Dawley</strain>
        <tissue>Intestine</tissue>
    </source>
</reference>
<reference key="2">
    <citation type="journal article" date="1991" name="J. Biol. Chem.">
        <title>Compartmentation of multiple forms of creatine kinase in the distal nephron of the rat kidney.</title>
        <authorList>
            <person name="Friedman D.L."/>
            <person name="Perryman M.B."/>
        </authorList>
    </citation>
    <scope>PROTEIN SEQUENCE OF 40-56</scope>
    <scope>TISSUE SPECIFICITY</scope>
</reference>
<reference key="3">
    <citation type="submission" date="2007-04" db="UniProtKB">
        <authorList>
            <person name="Lubec G."/>
            <person name="Afjehi-Sadat L."/>
            <person name="Chen W.-Q."/>
        </authorList>
    </citation>
    <scope>PROTEIN SEQUENCE OF 152-158; 191-200; 258-270 AND 311-326</scope>
    <scope>IDENTIFICATION BY MASS SPECTROMETRY</scope>
    <source>
        <strain>Sprague-Dawley</strain>
        <tissue>Hippocampus</tissue>
        <tissue>Spinal cord</tissue>
    </source>
</reference>
<reference key="4">
    <citation type="journal article" date="2012" name="Nat. Commun.">
        <title>Quantitative maps of protein phosphorylation sites across 14 different rat organs and tissues.</title>
        <authorList>
            <person name="Lundby A."/>
            <person name="Secher A."/>
            <person name="Lage K."/>
            <person name="Nordsborg N.B."/>
            <person name="Dmytriyev A."/>
            <person name="Lundby C."/>
            <person name="Olsen J.V."/>
        </authorList>
    </citation>
    <scope>PHOSPHORYLATION [LARGE SCALE ANALYSIS] AT SER-152 AND SER-197</scope>
    <scope>IDENTIFICATION BY MASS SPECTROMETRY [LARGE SCALE ANALYSIS]</scope>
</reference>
<feature type="transit peptide" description="Mitochondrion" evidence="8">
    <location>
        <begin position="1"/>
        <end position="39"/>
    </location>
</feature>
<feature type="chain" id="PRO_0000016592" description="Creatine kinase U-type, mitochondrial">
    <location>
        <begin position="40"/>
        <end position="418"/>
    </location>
</feature>
<feature type="domain" description="Phosphagen kinase N-terminal" evidence="5">
    <location>
        <begin position="46"/>
        <end position="132"/>
    </location>
</feature>
<feature type="domain" description="Phosphagen kinase C-terminal" evidence="6">
    <location>
        <begin position="159"/>
        <end position="401"/>
    </location>
</feature>
<feature type="region of interest" description="Cardiolipin-binding" evidence="1">
    <location>
        <begin position="40"/>
        <end position="64"/>
    </location>
</feature>
<feature type="binding site" evidence="6">
    <location>
        <begin position="162"/>
        <end position="166"/>
    </location>
    <ligand>
        <name>ATP</name>
        <dbReference type="ChEBI" id="CHEBI:30616"/>
    </ligand>
</feature>
<feature type="binding site" evidence="6">
    <location>
        <position position="225"/>
    </location>
    <ligand>
        <name>ATP</name>
        <dbReference type="ChEBI" id="CHEBI:30616"/>
    </ligand>
</feature>
<feature type="binding site" evidence="6">
    <location>
        <position position="270"/>
    </location>
    <ligand>
        <name>ATP</name>
        <dbReference type="ChEBI" id="CHEBI:30616"/>
    </ligand>
</feature>
<feature type="binding site" evidence="6">
    <location>
        <position position="326"/>
    </location>
    <ligand>
        <name>ATP</name>
        <dbReference type="ChEBI" id="CHEBI:30616"/>
    </ligand>
</feature>
<feature type="binding site" evidence="6">
    <location>
        <begin position="354"/>
        <end position="359"/>
    </location>
    <ligand>
        <name>ATP</name>
        <dbReference type="ChEBI" id="CHEBI:30616"/>
    </ligand>
</feature>
<feature type="binding site" evidence="6">
    <location>
        <position position="369"/>
    </location>
    <ligand>
        <name>ATP</name>
        <dbReference type="ChEBI" id="CHEBI:30616"/>
    </ligand>
</feature>
<feature type="modified residue" description="Phosphoserine" evidence="9">
    <location>
        <position position="152"/>
    </location>
</feature>
<feature type="modified residue" description="Phosphoserine" evidence="9">
    <location>
        <position position="197"/>
    </location>
</feature>
<feature type="modified residue" description="Phosphothreonine" evidence="2">
    <location>
        <position position="214"/>
    </location>
</feature>
<feature type="modified residue" description="Phosphoserine" evidence="4">
    <location>
        <position position="233"/>
    </location>
</feature>
<feature type="modified residue" description="Phosphothreonine" evidence="3">
    <location>
        <position position="356"/>
    </location>
</feature>
<evidence type="ECO:0000250" key="1"/>
<evidence type="ECO:0000250" key="2">
    <source>
        <dbReference type="UniProtKB" id="P00564"/>
    </source>
</evidence>
<evidence type="ECO:0000250" key="3">
    <source>
        <dbReference type="UniProtKB" id="P07310"/>
    </source>
</evidence>
<evidence type="ECO:0000250" key="4">
    <source>
        <dbReference type="UniProtKB" id="P30275"/>
    </source>
</evidence>
<evidence type="ECO:0000255" key="5">
    <source>
        <dbReference type="PROSITE-ProRule" id="PRU00842"/>
    </source>
</evidence>
<evidence type="ECO:0000255" key="6">
    <source>
        <dbReference type="PROSITE-ProRule" id="PRU00843"/>
    </source>
</evidence>
<evidence type="ECO:0000255" key="7">
    <source>
        <dbReference type="PROSITE-ProRule" id="PRU10029"/>
    </source>
</evidence>
<evidence type="ECO:0000269" key="8">
    <source>
    </source>
</evidence>
<evidence type="ECO:0007744" key="9">
    <source>
    </source>
</evidence>
<keyword id="KW-0067">ATP-binding</keyword>
<keyword id="KW-0903">Direct protein sequencing</keyword>
<keyword id="KW-0418">Kinase</keyword>
<keyword id="KW-0472">Membrane</keyword>
<keyword id="KW-0496">Mitochondrion</keyword>
<keyword id="KW-0999">Mitochondrion inner membrane</keyword>
<keyword id="KW-0547">Nucleotide-binding</keyword>
<keyword id="KW-0597">Phosphoprotein</keyword>
<keyword id="KW-1185">Reference proteome</keyword>
<keyword id="KW-0808">Transferase</keyword>
<keyword id="KW-0809">Transit peptide</keyword>
<organism>
    <name type="scientific">Rattus norvegicus</name>
    <name type="common">Rat</name>
    <dbReference type="NCBI Taxonomy" id="10116"/>
    <lineage>
        <taxon>Eukaryota</taxon>
        <taxon>Metazoa</taxon>
        <taxon>Chordata</taxon>
        <taxon>Craniata</taxon>
        <taxon>Vertebrata</taxon>
        <taxon>Euteleostomi</taxon>
        <taxon>Mammalia</taxon>
        <taxon>Eutheria</taxon>
        <taxon>Euarchontoglires</taxon>
        <taxon>Glires</taxon>
        <taxon>Rodentia</taxon>
        <taxon>Myomorpha</taxon>
        <taxon>Muroidea</taxon>
        <taxon>Muridae</taxon>
        <taxon>Murinae</taxon>
        <taxon>Rattus</taxon>
    </lineage>
</organism>